<feature type="chain" id="PRO_0000159829" description="tRNA (cytidine/uridine-2'-O-)-methyltransferase TrmJ">
    <location>
        <begin position="1"/>
        <end position="246"/>
    </location>
</feature>
<feature type="binding site" evidence="1">
    <location>
        <begin position="79"/>
        <end position="81"/>
    </location>
    <ligand>
        <name>S-adenosyl-L-methionine</name>
        <dbReference type="ChEBI" id="CHEBI:59789"/>
    </ligand>
</feature>
<feature type="binding site" evidence="1">
    <location>
        <position position="114"/>
    </location>
    <ligand>
        <name>S-adenosyl-L-methionine</name>
        <dbReference type="ChEBI" id="CHEBI:59789"/>
    </ligand>
</feature>
<feature type="binding site" evidence="1">
    <location>
        <position position="134"/>
    </location>
    <ligand>
        <name>S-adenosyl-L-methionine</name>
        <dbReference type="ChEBI" id="CHEBI:59789"/>
    </ligand>
</feature>
<feature type="binding site" evidence="1">
    <location>
        <begin position="141"/>
        <end position="143"/>
    </location>
    <ligand>
        <name>S-adenosyl-L-methionine</name>
        <dbReference type="ChEBI" id="CHEBI:59789"/>
    </ligand>
</feature>
<gene>
    <name type="primary">trmJ</name>
    <name type="ordered locus">SF2579</name>
    <name type="ordered locus">S2751</name>
</gene>
<sequence length="246" mass="27048">MLQNIRIVLVETSHTGNMGSVARAMKTMGLTNLWLVNPLVKPDSQAIALAAGASDVIGNAHIVDTLDEALAGCSLVVGTSARSRTLPWPMLDPRECGLKSVAEAANTPVALVFGRERVGLTNEELQKCHYHVAIAANPEYSSLNLAMAVQVIAYEVRMAWLATQENGEQVEHEETPYPLVDDLERFYGHLEQTLLATGFIRENHPGQVMNKLRRLFTRARPESQELNILRGILASIEQQNKGNKAE</sequence>
<reference key="1">
    <citation type="journal article" date="2002" name="Nucleic Acids Res.">
        <title>Genome sequence of Shigella flexneri 2a: insights into pathogenicity through comparison with genomes of Escherichia coli K12 and O157.</title>
        <authorList>
            <person name="Jin Q."/>
            <person name="Yuan Z."/>
            <person name="Xu J."/>
            <person name="Wang Y."/>
            <person name="Shen Y."/>
            <person name="Lu W."/>
            <person name="Wang J."/>
            <person name="Liu H."/>
            <person name="Yang J."/>
            <person name="Yang F."/>
            <person name="Zhang X."/>
            <person name="Zhang J."/>
            <person name="Yang G."/>
            <person name="Wu H."/>
            <person name="Qu D."/>
            <person name="Dong J."/>
            <person name="Sun L."/>
            <person name="Xue Y."/>
            <person name="Zhao A."/>
            <person name="Gao Y."/>
            <person name="Zhu J."/>
            <person name="Kan B."/>
            <person name="Ding K."/>
            <person name="Chen S."/>
            <person name="Cheng H."/>
            <person name="Yao Z."/>
            <person name="He B."/>
            <person name="Chen R."/>
            <person name="Ma D."/>
            <person name="Qiang B."/>
            <person name="Wen Y."/>
            <person name="Hou Y."/>
            <person name="Yu J."/>
        </authorList>
    </citation>
    <scope>NUCLEOTIDE SEQUENCE [LARGE SCALE GENOMIC DNA]</scope>
    <source>
        <strain>301 / Serotype 2a</strain>
    </source>
</reference>
<reference key="2">
    <citation type="journal article" date="2003" name="Infect. Immun.">
        <title>Complete genome sequence and comparative genomics of Shigella flexneri serotype 2a strain 2457T.</title>
        <authorList>
            <person name="Wei J."/>
            <person name="Goldberg M.B."/>
            <person name="Burland V."/>
            <person name="Venkatesan M.M."/>
            <person name="Deng W."/>
            <person name="Fournier G."/>
            <person name="Mayhew G.F."/>
            <person name="Plunkett G. III"/>
            <person name="Rose D.J."/>
            <person name="Darling A."/>
            <person name="Mau B."/>
            <person name="Perna N.T."/>
            <person name="Payne S.M."/>
            <person name="Runyen-Janecky L.J."/>
            <person name="Zhou S."/>
            <person name="Schwartz D.C."/>
            <person name="Blattner F.R."/>
        </authorList>
    </citation>
    <scope>NUCLEOTIDE SEQUENCE [LARGE SCALE GENOMIC DNA]</scope>
    <source>
        <strain>ATCC 700930 / 2457T / Serotype 2a</strain>
    </source>
</reference>
<proteinExistence type="inferred from homology"/>
<name>TRMJ_SHIFL</name>
<accession>P0AE03</accession>
<accession>P76993</accession>
<accession>P77438</accession>
<keyword id="KW-0963">Cytoplasm</keyword>
<keyword id="KW-0489">Methyltransferase</keyword>
<keyword id="KW-1185">Reference proteome</keyword>
<keyword id="KW-0949">S-adenosyl-L-methionine</keyword>
<keyword id="KW-0808">Transferase</keyword>
<keyword id="KW-0819">tRNA processing</keyword>
<protein>
    <recommendedName>
        <fullName evidence="1">tRNA (cytidine/uridine-2'-O-)-methyltransferase TrmJ</fullName>
        <ecNumber evidence="1">2.1.1.200</ecNumber>
    </recommendedName>
    <alternativeName>
        <fullName evidence="1">tRNA (cytidine(32)/uridine(32)-2'-O)-methyltransferase</fullName>
    </alternativeName>
    <alternativeName>
        <fullName evidence="1">tRNA Cm32/Um32 methyltransferase</fullName>
    </alternativeName>
</protein>
<comment type="function">
    <text evidence="1">Catalyzes the formation of 2'O-methylated cytidine (Cm32) or 2'O-methylated uridine (Um32) at position 32 in tRNA.</text>
</comment>
<comment type="catalytic activity">
    <reaction evidence="1">
        <text>cytidine(32) in tRNA + S-adenosyl-L-methionine = 2'-O-methylcytidine(32) in tRNA + S-adenosyl-L-homocysteine + H(+)</text>
        <dbReference type="Rhea" id="RHEA:42932"/>
        <dbReference type="Rhea" id="RHEA-COMP:10288"/>
        <dbReference type="Rhea" id="RHEA-COMP:10289"/>
        <dbReference type="ChEBI" id="CHEBI:15378"/>
        <dbReference type="ChEBI" id="CHEBI:57856"/>
        <dbReference type="ChEBI" id="CHEBI:59789"/>
        <dbReference type="ChEBI" id="CHEBI:74495"/>
        <dbReference type="ChEBI" id="CHEBI:82748"/>
        <dbReference type="EC" id="2.1.1.200"/>
    </reaction>
</comment>
<comment type="catalytic activity">
    <reaction evidence="1">
        <text>uridine(32) in tRNA + S-adenosyl-L-methionine = 2'-O-methyluridine(32) in tRNA + S-adenosyl-L-homocysteine + H(+)</text>
        <dbReference type="Rhea" id="RHEA:42936"/>
        <dbReference type="Rhea" id="RHEA-COMP:10107"/>
        <dbReference type="Rhea" id="RHEA-COMP:10290"/>
        <dbReference type="ChEBI" id="CHEBI:15378"/>
        <dbReference type="ChEBI" id="CHEBI:57856"/>
        <dbReference type="ChEBI" id="CHEBI:59789"/>
        <dbReference type="ChEBI" id="CHEBI:65315"/>
        <dbReference type="ChEBI" id="CHEBI:74478"/>
        <dbReference type="EC" id="2.1.1.200"/>
    </reaction>
</comment>
<comment type="subunit">
    <text evidence="1">Homodimer.</text>
</comment>
<comment type="subcellular location">
    <subcellularLocation>
        <location evidence="1">Cytoplasm</location>
    </subcellularLocation>
</comment>
<comment type="similarity">
    <text evidence="2">Belongs to the class IV-like SAM-binding methyltransferase superfamily. RNA methyltransferase TrmH family.</text>
</comment>
<organism>
    <name type="scientific">Shigella flexneri</name>
    <dbReference type="NCBI Taxonomy" id="623"/>
    <lineage>
        <taxon>Bacteria</taxon>
        <taxon>Pseudomonadati</taxon>
        <taxon>Pseudomonadota</taxon>
        <taxon>Gammaproteobacteria</taxon>
        <taxon>Enterobacterales</taxon>
        <taxon>Enterobacteriaceae</taxon>
        <taxon>Shigella</taxon>
    </lineage>
</organism>
<evidence type="ECO:0000250" key="1">
    <source>
        <dbReference type="UniProtKB" id="P0AE01"/>
    </source>
</evidence>
<evidence type="ECO:0000305" key="2"/>
<dbReference type="EC" id="2.1.1.200" evidence="1"/>
<dbReference type="EMBL" id="AE005674">
    <property type="protein sequence ID" value="AAN44078.1"/>
    <property type="molecule type" value="Genomic_DNA"/>
</dbReference>
<dbReference type="EMBL" id="AE014073">
    <property type="protein sequence ID" value="AAP17903.1"/>
    <property type="molecule type" value="Genomic_DNA"/>
</dbReference>
<dbReference type="RefSeq" id="NP_708371.1">
    <property type="nucleotide sequence ID" value="NC_004337.2"/>
</dbReference>
<dbReference type="RefSeq" id="WP_000940019.1">
    <property type="nucleotide sequence ID" value="NZ_WPGW01000021.1"/>
</dbReference>
<dbReference type="SMR" id="P0AE03"/>
<dbReference type="STRING" id="198214.SF2579"/>
<dbReference type="PaxDb" id="198214-SF2579"/>
<dbReference type="GeneID" id="1027574"/>
<dbReference type="GeneID" id="86860658"/>
<dbReference type="KEGG" id="sfl:SF2579"/>
<dbReference type="KEGG" id="sfx:S2751"/>
<dbReference type="PATRIC" id="fig|198214.7.peg.3079"/>
<dbReference type="HOGENOM" id="CLU_056931_0_1_6"/>
<dbReference type="Proteomes" id="UP000001006">
    <property type="component" value="Chromosome"/>
</dbReference>
<dbReference type="Proteomes" id="UP000002673">
    <property type="component" value="Chromosome"/>
</dbReference>
<dbReference type="GO" id="GO:0005829">
    <property type="term" value="C:cytosol"/>
    <property type="evidence" value="ECO:0007669"/>
    <property type="project" value="TreeGrafter"/>
</dbReference>
<dbReference type="GO" id="GO:0003723">
    <property type="term" value="F:RNA binding"/>
    <property type="evidence" value="ECO:0007669"/>
    <property type="project" value="InterPro"/>
</dbReference>
<dbReference type="GO" id="GO:0160206">
    <property type="term" value="F:tRNA (cytidine(32)/uridine(32)-2'-O)-methyltransferase activity"/>
    <property type="evidence" value="ECO:0007669"/>
    <property type="project" value="UniProtKB-EC"/>
</dbReference>
<dbReference type="GO" id="GO:0002128">
    <property type="term" value="P:tRNA nucleoside ribose methylation"/>
    <property type="evidence" value="ECO:0007669"/>
    <property type="project" value="TreeGrafter"/>
</dbReference>
<dbReference type="CDD" id="cd18093">
    <property type="entry name" value="SpoU-like_TrmJ"/>
    <property type="match status" value="1"/>
</dbReference>
<dbReference type="FunFam" id="1.10.8.590:FF:000001">
    <property type="entry name" value="tRNA:Cm32/Um32 methyltransferase"/>
    <property type="match status" value="1"/>
</dbReference>
<dbReference type="FunFam" id="3.40.1280.10:FF:000006">
    <property type="entry name" value="Uncharacterized tRNA/rRNA methyltransferase HI_0380"/>
    <property type="match status" value="1"/>
</dbReference>
<dbReference type="Gene3D" id="1.10.8.590">
    <property type="match status" value="1"/>
</dbReference>
<dbReference type="Gene3D" id="3.40.1280.10">
    <property type="match status" value="1"/>
</dbReference>
<dbReference type="InterPro" id="IPR029028">
    <property type="entry name" value="Alpha/beta_knot_MTases"/>
</dbReference>
<dbReference type="InterPro" id="IPR004384">
    <property type="entry name" value="RNA_MeTrfase_TrmJ/LasT"/>
</dbReference>
<dbReference type="InterPro" id="IPR001537">
    <property type="entry name" value="SpoU_MeTrfase"/>
</dbReference>
<dbReference type="InterPro" id="IPR029026">
    <property type="entry name" value="tRNA_m1G_MTases_N"/>
</dbReference>
<dbReference type="NCBIfam" id="NF011694">
    <property type="entry name" value="PRK15114.1"/>
    <property type="match status" value="1"/>
</dbReference>
<dbReference type="NCBIfam" id="TIGR00050">
    <property type="entry name" value="rRNA_methyl_1"/>
    <property type="match status" value="1"/>
</dbReference>
<dbReference type="PANTHER" id="PTHR42786:SF2">
    <property type="entry name" value="TRNA (CYTIDINE_URIDINE-2'-O-)-METHYLTRANSFERASE TRMJ"/>
    <property type="match status" value="1"/>
</dbReference>
<dbReference type="PANTHER" id="PTHR42786">
    <property type="entry name" value="TRNA/RRNA METHYLTRANSFERASE"/>
    <property type="match status" value="1"/>
</dbReference>
<dbReference type="Pfam" id="PF00588">
    <property type="entry name" value="SpoU_methylase"/>
    <property type="match status" value="1"/>
</dbReference>
<dbReference type="PIRSF" id="PIRSF004808">
    <property type="entry name" value="LasT"/>
    <property type="match status" value="1"/>
</dbReference>
<dbReference type="SUPFAM" id="SSF75217">
    <property type="entry name" value="alpha/beta knot"/>
    <property type="match status" value="1"/>
</dbReference>